<feature type="chain" id="PRO_0000118377" description="NADH-quinone oxidoreductase subunit J">
    <location>
        <begin position="1"/>
        <end position="202"/>
    </location>
</feature>
<feature type="transmembrane region" description="Helical" evidence="1">
    <location>
        <begin position="3"/>
        <end position="23"/>
    </location>
</feature>
<feature type="transmembrane region" description="Helical" evidence="1">
    <location>
        <begin position="31"/>
        <end position="51"/>
    </location>
</feature>
<feature type="transmembrane region" description="Helical" evidence="1">
    <location>
        <begin position="53"/>
        <end position="73"/>
    </location>
</feature>
<feature type="transmembrane region" description="Helical" evidence="1">
    <location>
        <begin position="93"/>
        <end position="113"/>
    </location>
</feature>
<feature type="transmembrane region" description="Helical" evidence="1">
    <location>
        <begin position="146"/>
        <end position="166"/>
    </location>
</feature>
<protein>
    <recommendedName>
        <fullName>NADH-quinone oxidoreductase subunit J</fullName>
        <ecNumber>7.1.1.-</ecNumber>
    </recommendedName>
    <alternativeName>
        <fullName>NADH dehydrogenase I subunit J</fullName>
    </alternativeName>
    <alternativeName>
        <fullName>NDH-1 subunit J</fullName>
    </alternativeName>
</protein>
<keyword id="KW-0472">Membrane</keyword>
<keyword id="KW-0520">NAD</keyword>
<keyword id="KW-0874">Quinone</keyword>
<keyword id="KW-1278">Translocase</keyword>
<keyword id="KW-0812">Transmembrane</keyword>
<keyword id="KW-1133">Transmembrane helix</keyword>
<keyword id="KW-0830">Ubiquinone</keyword>
<comment type="function">
    <text>NDH-1 shuttles electrons from NADH, via FMN and iron-sulfur (Fe-S) centers, to quinones in the respiratory chain. The immediate electron acceptor for the enzyme in this species is believed to be ubiquinone. Couples the redox reaction to proton translocation (for every two electrons transferred, four hydrogen ions are translocated across the cytoplasmic membrane), and thus conserves the redox energy in a proton gradient.</text>
</comment>
<comment type="catalytic activity">
    <reaction>
        <text>a quinone + NADH + 5 H(+)(in) = a quinol + NAD(+) + 4 H(+)(out)</text>
        <dbReference type="Rhea" id="RHEA:57888"/>
        <dbReference type="ChEBI" id="CHEBI:15378"/>
        <dbReference type="ChEBI" id="CHEBI:24646"/>
        <dbReference type="ChEBI" id="CHEBI:57540"/>
        <dbReference type="ChEBI" id="CHEBI:57945"/>
        <dbReference type="ChEBI" id="CHEBI:132124"/>
    </reaction>
</comment>
<comment type="subunit">
    <text evidence="3">NDH-1 is composed of 14 different subunits. Subunits NuoA, H, J, K, L, M, N constitute the membrane sector of the complex (Probable).</text>
</comment>
<comment type="subcellular location">
    <subcellularLocation>
        <location evidence="2">Cellular chromatophore membrane</location>
        <topology evidence="2">Multi-pass membrane protein</topology>
    </subcellularLocation>
</comment>
<comment type="disruption phenotype">
    <text evidence="2">No functional NADH-quinone oxidoreductase complex. Cells lacking this gene have a nearly normal respiratory growth phenotype on lactate, however they are unable to perform anaerobic photosynthesis. It is suggested that in R.capsulatus this complex may function in reverse flow under physiological conditions.</text>
</comment>
<comment type="similarity">
    <text evidence="3">Belongs to the complex I subunit 6 family.</text>
</comment>
<accession>P50975</accession>
<dbReference type="EC" id="7.1.1.-"/>
<dbReference type="EMBL" id="AF029365">
    <property type="protein sequence ID" value="AAC25001.1"/>
    <property type="molecule type" value="Genomic_DNA"/>
</dbReference>
<dbReference type="RefSeq" id="WP_013067257.1">
    <property type="nucleotide sequence ID" value="NZ_JAOTPJ010000037.1"/>
</dbReference>
<dbReference type="SMR" id="P50975"/>
<dbReference type="OMA" id="AWVQVLI"/>
<dbReference type="GO" id="GO:0042717">
    <property type="term" value="C:plasma membrane-derived chromatophore membrane"/>
    <property type="evidence" value="ECO:0007669"/>
    <property type="project" value="UniProtKB-SubCell"/>
</dbReference>
<dbReference type="GO" id="GO:0008137">
    <property type="term" value="F:NADH dehydrogenase (ubiquinone) activity"/>
    <property type="evidence" value="ECO:0007669"/>
    <property type="project" value="InterPro"/>
</dbReference>
<dbReference type="GO" id="GO:0048038">
    <property type="term" value="F:quinone binding"/>
    <property type="evidence" value="ECO:0007669"/>
    <property type="project" value="UniProtKB-KW"/>
</dbReference>
<dbReference type="Gene3D" id="1.20.120.1200">
    <property type="entry name" value="NADH-ubiquinone/plastoquinone oxidoreductase chain 6, subunit NuoJ"/>
    <property type="match status" value="1"/>
</dbReference>
<dbReference type="InterPro" id="IPR001457">
    <property type="entry name" value="NADH_UbQ/plastoQ_OxRdtase_su6"/>
</dbReference>
<dbReference type="InterPro" id="IPR042106">
    <property type="entry name" value="Nuo/plastoQ_OxRdtase_6_NuoJ"/>
</dbReference>
<dbReference type="NCBIfam" id="NF005164">
    <property type="entry name" value="PRK06638.1-4"/>
    <property type="match status" value="1"/>
</dbReference>
<dbReference type="PANTHER" id="PTHR33269">
    <property type="entry name" value="NADH-UBIQUINONE OXIDOREDUCTASE CHAIN 6"/>
    <property type="match status" value="1"/>
</dbReference>
<dbReference type="PANTHER" id="PTHR33269:SF17">
    <property type="entry name" value="NADH-UBIQUINONE OXIDOREDUCTASE CHAIN 6"/>
    <property type="match status" value="1"/>
</dbReference>
<dbReference type="Pfam" id="PF00499">
    <property type="entry name" value="Oxidored_q3"/>
    <property type="match status" value="1"/>
</dbReference>
<reference key="1">
    <citation type="journal article" date="1995" name="Gene">
        <title>Identification of five Rhodobacter capsulatus genes encoding the equivalent of ND subunits of the mitochondrial NADH-ubiquinone oxidoreductase.</title>
        <authorList>
            <person name="Dupuis A."/>
            <person name="Peinnequin A."/>
            <person name="Chevallet M."/>
            <person name="Lunardi J."/>
            <person name="Darrouzet E."/>
            <person name="Pierrard B."/>
            <person name="Procaccio V."/>
            <person name="Issartel J.P."/>
        </authorList>
    </citation>
    <scope>NUCLEOTIDE SEQUENCE [GENOMIC DNA]</scope>
    <source>
        <strain>ATCC 33303 / B10</strain>
    </source>
</reference>
<reference key="2">
    <citation type="journal article" date="1998" name="Mol. Microbiol.">
        <title>Distal genes of the nuo operon of Rhodobacter capsulatus equivalent to the mitochondrial ND subunits are all essential for the biogenesis of the respiratory NADH-ubiquinone oxidoreductase.</title>
        <authorList>
            <person name="Dupuis A."/>
            <person name="Darrouzet E."/>
            <person name="Duborjal H."/>
            <person name="Pierrard B."/>
            <person name="Chevallet M."/>
            <person name="van Belzen R."/>
            <person name="Albracht S.P.J."/>
            <person name="Lunardi J."/>
        </authorList>
    </citation>
    <scope>SUBCELLULAR LOCATION IN CHROMATOPHORE</scope>
    <scope>DISRUPTION PHENOTYPE</scope>
    <source>
        <strain>ATCC 33303 / B10</strain>
    </source>
</reference>
<gene>
    <name type="primary">nuoJ</name>
</gene>
<evidence type="ECO:0000255" key="1"/>
<evidence type="ECO:0000269" key="2">
    <source>
    </source>
</evidence>
<evidence type="ECO:0000305" key="3"/>
<proteinExistence type="inferred from homology"/>
<organism>
    <name type="scientific">Rhodobacter capsulatus</name>
    <name type="common">Rhodopseudomonas capsulata</name>
    <dbReference type="NCBI Taxonomy" id="1061"/>
    <lineage>
        <taxon>Bacteria</taxon>
        <taxon>Pseudomonadati</taxon>
        <taxon>Pseudomonadota</taxon>
        <taxon>Alphaproteobacteria</taxon>
        <taxon>Rhodobacterales</taxon>
        <taxon>Rhodobacter group</taxon>
        <taxon>Rhodobacter</taxon>
    </lineage>
</organism>
<name>NUOJ_RHOCA</name>
<sequence>MTVFVFAFYLFAVVAVVAGLMVVLSKNPVHAVLWLILTFLSAAGLFVLMGAEFVAMLLIIVYVGAVAVLFLFVVMMLDIDFAALRGQLVRYAPVGGLIALVMLAQLATGLMVWNTADAANGLRAAPAPEGVENTAALGMILYDRYLYLFQGAGLVLLVAMIGAILLTLRHRTDIKRQNVLAQMHRDPAKALEMVDVKPGQGL</sequence>